<protein>
    <recommendedName>
        <fullName>Galactomannan galactosyltransferase 1</fullName>
        <ecNumber>2.4.1.-</ecNumber>
    </recommendedName>
</protein>
<organism>
    <name type="scientific">Cyamopsis tetragonoloba</name>
    <name type="common">Guar</name>
    <name type="synonym">Cluster bean</name>
    <dbReference type="NCBI Taxonomy" id="3832"/>
    <lineage>
        <taxon>Eukaryota</taxon>
        <taxon>Viridiplantae</taxon>
        <taxon>Streptophyta</taxon>
        <taxon>Embryophyta</taxon>
        <taxon>Tracheophyta</taxon>
        <taxon>Spermatophyta</taxon>
        <taxon>Magnoliopsida</taxon>
        <taxon>eudicotyledons</taxon>
        <taxon>Gunneridae</taxon>
        <taxon>Pentapetalae</taxon>
        <taxon>rosids</taxon>
        <taxon>fabids</taxon>
        <taxon>Fabales</taxon>
        <taxon>Fabaceae</taxon>
        <taxon>Papilionoideae</taxon>
        <taxon>50 kb inversion clade</taxon>
        <taxon>NPAAA clade</taxon>
        <taxon>indigoferoid/millettioid clade</taxon>
        <taxon>Indigofereae</taxon>
        <taxon>Cyamopsis</taxon>
    </lineage>
</organism>
<accession>Q564G7</accession>
<comment type="function">
    <text evidence="2">Galactomannan galactosyltransferase (GMGT) involved in galactomannan biosynthesis in seed endosperm. GMGT specificity is an important factor regulating the distribution and amount of alpha-1,6-galactose (Gal) substitution of the beta-1,4-linked mannan backbone.</text>
</comment>
<comment type="subcellular location">
    <subcellularLocation>
        <location evidence="3">Golgi apparatus membrane</location>
        <topology evidence="3">Single-pass type II membrane protein</topology>
    </subcellularLocation>
</comment>
<comment type="biotechnology">
    <text>Guar gum also called guaran is a galactomannan extracted from guar seed endosperm. Gums are most commonly used as food additives to provide stiffness and texture, prevent ice crystal formation, maintain crispiness, and retain moisture. They have many other nonfood applications such as dying and printing aids in the textile industry, thickeners for shampoos and conditioners, binders and hardeners for paper, rheological facilitators for concrete, and drilling agents for oil and gas wells.</text>
</comment>
<comment type="miscellaneous">
    <text>Galactomannan is accumulated only in the endosperm and constitutes more than 90% of this tissue at maturity. Galactomannan is made by the combined actions of two enzymes: mannan synthase (ManS), which makes beta-1,4-linked mannan backbone, and alpha-galactosyltransferase, which adds galactosyl residues to the mannan backbone. The mannose/galactose ratio of guar galactomannan is 2. The degree of galactosyl substitution on the mannan backbone determines the quality of galactomannan as a gum. A mannose/galactose ratio of 4 provides a gum of higher quality than a ratio of 2.</text>
</comment>
<comment type="similarity">
    <text evidence="3">Belongs to the glycosyltransferase 34 family.</text>
</comment>
<evidence type="ECO:0000255" key="1"/>
<evidence type="ECO:0000269" key="2">
    <source>
    </source>
</evidence>
<evidence type="ECO:0000305" key="3"/>
<proteinExistence type="evidence at protein level"/>
<feature type="chain" id="PRO_0000319356" description="Galactomannan galactosyltransferase 1">
    <location>
        <begin position="1"/>
        <end position="435"/>
    </location>
</feature>
<feature type="topological domain" description="Cytoplasmic" evidence="1">
    <location>
        <begin position="1"/>
        <end position="20"/>
    </location>
</feature>
<feature type="transmembrane region" description="Helical; Signal-anchor for type II membrane protein" evidence="1">
    <location>
        <begin position="21"/>
        <end position="41"/>
    </location>
</feature>
<feature type="topological domain" description="Lumenal" evidence="1">
    <location>
        <begin position="42"/>
        <end position="435"/>
    </location>
</feature>
<feature type="coiled-coil region" evidence="1">
    <location>
        <begin position="321"/>
        <end position="354"/>
    </location>
</feature>
<feature type="glycosylation site" description="N-linked (GlcNAc...) asparagine" evidence="1">
    <location>
        <position position="230"/>
    </location>
</feature>
<feature type="glycosylation site" description="N-linked (GlcNAc...) asparagine" evidence="1">
    <location>
        <position position="328"/>
    </location>
</feature>
<dbReference type="EC" id="2.4.1.-"/>
<dbReference type="EMBL" id="AJ938067">
    <property type="protein sequence ID" value="CAI79402.1"/>
    <property type="molecule type" value="mRNA"/>
</dbReference>
<dbReference type="SMR" id="Q564G7"/>
<dbReference type="CAZy" id="GT34">
    <property type="family name" value="Glycosyltransferase Family 34"/>
</dbReference>
<dbReference type="GlyCosmos" id="Q564G7">
    <property type="glycosylation" value="2 sites, No reported glycans"/>
</dbReference>
<dbReference type="GO" id="GO:0005768">
    <property type="term" value="C:endosome"/>
    <property type="evidence" value="ECO:0007669"/>
    <property type="project" value="TreeGrafter"/>
</dbReference>
<dbReference type="GO" id="GO:0000139">
    <property type="term" value="C:Golgi membrane"/>
    <property type="evidence" value="ECO:0007669"/>
    <property type="project" value="UniProtKB-SubCell"/>
</dbReference>
<dbReference type="GO" id="GO:0005802">
    <property type="term" value="C:trans-Golgi network"/>
    <property type="evidence" value="ECO:0007669"/>
    <property type="project" value="TreeGrafter"/>
</dbReference>
<dbReference type="GO" id="GO:0008378">
    <property type="term" value="F:galactosyltransferase activity"/>
    <property type="evidence" value="ECO:0007669"/>
    <property type="project" value="TreeGrafter"/>
</dbReference>
<dbReference type="GO" id="GO:0071555">
    <property type="term" value="P:cell wall organization"/>
    <property type="evidence" value="ECO:0007669"/>
    <property type="project" value="UniProtKB-KW"/>
</dbReference>
<dbReference type="FunFam" id="3.90.550.10:FF:000127">
    <property type="entry name" value="Probable glycosyltransferase 7"/>
    <property type="match status" value="1"/>
</dbReference>
<dbReference type="Gene3D" id="3.90.550.10">
    <property type="entry name" value="Spore Coat Polysaccharide Biosynthesis Protein SpsA, Chain A"/>
    <property type="match status" value="1"/>
</dbReference>
<dbReference type="InterPro" id="IPR008630">
    <property type="entry name" value="Glyco_trans_34"/>
</dbReference>
<dbReference type="InterPro" id="IPR029044">
    <property type="entry name" value="Nucleotide-diphossugar_trans"/>
</dbReference>
<dbReference type="PANTHER" id="PTHR31311:SF26">
    <property type="entry name" value="ALPHA-6-GALACTOSYLTRANSFERASE"/>
    <property type="match status" value="1"/>
</dbReference>
<dbReference type="PANTHER" id="PTHR31311">
    <property type="entry name" value="XYLOGLUCAN 6-XYLOSYLTRANSFERASE 5-RELATED-RELATED"/>
    <property type="match status" value="1"/>
</dbReference>
<dbReference type="Pfam" id="PF05637">
    <property type="entry name" value="Glyco_transf_34"/>
    <property type="match status" value="1"/>
</dbReference>
<gene>
    <name type="primary">GMGT1</name>
</gene>
<reference key="1">
    <citation type="submission" date="2005-04" db="EMBL/GenBank/DDBJ databases">
        <title>In vitro galactomannan biosynthesis in tobacco transgenic lines expressing legume seed galactomannan galactosyltransferases (GMGTs).</title>
        <authorList>
            <person name="Reid J.S.G."/>
            <person name="Edwards M.E."/>
            <person name="Dickson C.A."/>
            <person name="Gidley M.J."/>
            <person name="Clark A.H."/>
        </authorList>
    </citation>
    <scope>NUCLEOTIDE SEQUENCE [MRNA]</scope>
    <source>
        <tissue>Seed endosperm</tissue>
    </source>
</reference>
<reference key="2">
    <citation type="journal article" date="2004" name="Plant Physiol.">
        <title>The seeds of Lotus japonicus lines transformed with sense, antisense, and sense/antisense galactomannan galactosyltransferase constructs have structurally altered galactomannans in their endosperm cell walls.</title>
        <authorList>
            <person name="Edwards M.E."/>
            <person name="Choo T.-S."/>
            <person name="Dickson C.A."/>
            <person name="Scott C."/>
            <person name="Gidley M.J."/>
            <person name="Reid J.S.G."/>
        </authorList>
    </citation>
    <scope>FUNCTION</scope>
</reference>
<sequence length="435" mass="50956">MAKFGSRNKSPKWISNGCCFLLGAFTALLLLWGLCSFIIPIPNTDPKLNSVATSLRSLNFPKNPAATLPPNLQHDPPDTTFYDDPETSYTMDKPMKNWDEKRKEWLLHHPSFGAAARDKILLVTGSQPKRCHNPIGDHLLLRFFKNKVDYCRLHNYDIIYNNALLHPKMNSYWAKYPVIRAAMMAHPEVEWVWWVDSDAVFTDMEFKLPLKRYKNHNLVVHGWEGLVRLNHSWTGLNAGVFLIRNCQWSLEFMDVWVSMGPQTPEYEKWGERLRETFKDKVLPDSDDQTALAYLIATDNKDTWREKIFLESEYYFEGYWLEIVKTYENISERYDEVERKVEGLRRRHAEKVSEKYGAMREEYLKDNKRRPFITHFTGCQPCNGHHNPAYNANDCWNGMERALNFADNQILRTYGYHRQNLLDKSVSPLPFGYPAA</sequence>
<keyword id="KW-0961">Cell wall biogenesis/degradation</keyword>
<keyword id="KW-0175">Coiled coil</keyword>
<keyword id="KW-0325">Glycoprotein</keyword>
<keyword id="KW-0328">Glycosyltransferase</keyword>
<keyword id="KW-0333">Golgi apparatus</keyword>
<keyword id="KW-0472">Membrane</keyword>
<keyword id="KW-0735">Signal-anchor</keyword>
<keyword id="KW-0808">Transferase</keyword>
<keyword id="KW-0812">Transmembrane</keyword>
<keyword id="KW-1133">Transmembrane helix</keyword>
<name>GMGT1_CYATE</name>